<sequence length="155" mass="17877">MRCPFCGNIDTQVKDSRPAEDHVSIRRRRFCPACGGRFTTYERVQLRDLVVIKSTGKREDFDRDKLERSIRISMQKRPIDPERIDQMISGIVRRLESMGETDIGSKQIGEIVMEALARIDTVAYVRFASVYKNFQAADDFDKFVSELRPDVPGDE</sequence>
<accession>Q169C7</accession>
<feature type="chain" id="PRO_0000264205" description="Transcriptional repressor NrdR">
    <location>
        <begin position="1"/>
        <end position="155"/>
    </location>
</feature>
<feature type="domain" description="ATP-cone" evidence="1">
    <location>
        <begin position="49"/>
        <end position="139"/>
    </location>
</feature>
<feature type="zinc finger region" evidence="1">
    <location>
        <begin position="3"/>
        <end position="34"/>
    </location>
</feature>
<proteinExistence type="inferred from homology"/>
<protein>
    <recommendedName>
        <fullName evidence="1">Transcriptional repressor NrdR</fullName>
    </recommendedName>
</protein>
<evidence type="ECO:0000255" key="1">
    <source>
        <dbReference type="HAMAP-Rule" id="MF_00440"/>
    </source>
</evidence>
<keyword id="KW-0067">ATP-binding</keyword>
<keyword id="KW-0238">DNA-binding</keyword>
<keyword id="KW-0479">Metal-binding</keyword>
<keyword id="KW-0547">Nucleotide-binding</keyword>
<keyword id="KW-1185">Reference proteome</keyword>
<keyword id="KW-0678">Repressor</keyword>
<keyword id="KW-0804">Transcription</keyword>
<keyword id="KW-0805">Transcription regulation</keyword>
<keyword id="KW-0862">Zinc</keyword>
<keyword id="KW-0863">Zinc-finger</keyword>
<reference key="1">
    <citation type="journal article" date="2007" name="J. Bacteriol.">
        <title>The complete genome sequence of Roseobacter denitrificans reveals a mixotrophic rather than photosynthetic metabolism.</title>
        <authorList>
            <person name="Swingley W.D."/>
            <person name="Sadekar S."/>
            <person name="Mastrian S.D."/>
            <person name="Matthies H.J."/>
            <person name="Hao J."/>
            <person name="Ramos H."/>
            <person name="Acharya C.R."/>
            <person name="Conrad A.L."/>
            <person name="Taylor H.L."/>
            <person name="Dejesa L.C."/>
            <person name="Shah M.K."/>
            <person name="O'Huallachain M.E."/>
            <person name="Lince M.T."/>
            <person name="Blankenship R.E."/>
            <person name="Beatty J.T."/>
            <person name="Touchman J.W."/>
        </authorList>
    </citation>
    <scope>NUCLEOTIDE SEQUENCE [LARGE SCALE GENOMIC DNA]</scope>
    <source>
        <strain>ATCC 33942 / OCh 114</strain>
    </source>
</reference>
<gene>
    <name evidence="1" type="primary">nrdR</name>
    <name type="ordered locus">RD1_1798</name>
</gene>
<organism>
    <name type="scientific">Roseobacter denitrificans (strain ATCC 33942 / OCh 114)</name>
    <name type="common">Erythrobacter sp. (strain OCh 114)</name>
    <name type="synonym">Roseobacter denitrificans</name>
    <dbReference type="NCBI Taxonomy" id="375451"/>
    <lineage>
        <taxon>Bacteria</taxon>
        <taxon>Pseudomonadati</taxon>
        <taxon>Pseudomonadota</taxon>
        <taxon>Alphaproteobacteria</taxon>
        <taxon>Rhodobacterales</taxon>
        <taxon>Roseobacteraceae</taxon>
        <taxon>Roseobacter</taxon>
    </lineage>
</organism>
<name>NRDR_ROSDO</name>
<comment type="function">
    <text evidence="1">Negatively regulates transcription of bacterial ribonucleotide reductase nrd genes and operons by binding to NrdR-boxes.</text>
</comment>
<comment type="cofactor">
    <cofactor evidence="1">
        <name>Zn(2+)</name>
        <dbReference type="ChEBI" id="CHEBI:29105"/>
    </cofactor>
    <text evidence="1">Binds 1 zinc ion.</text>
</comment>
<comment type="similarity">
    <text evidence="1">Belongs to the NrdR family.</text>
</comment>
<dbReference type="EMBL" id="CP000362">
    <property type="protein sequence ID" value="ABG31416.1"/>
    <property type="molecule type" value="Genomic_DNA"/>
</dbReference>
<dbReference type="RefSeq" id="WP_011568035.1">
    <property type="nucleotide sequence ID" value="NC_008209.1"/>
</dbReference>
<dbReference type="SMR" id="Q169C7"/>
<dbReference type="STRING" id="375451.RD1_1798"/>
<dbReference type="KEGG" id="rde:RD1_1798"/>
<dbReference type="eggNOG" id="COG1327">
    <property type="taxonomic scope" value="Bacteria"/>
</dbReference>
<dbReference type="HOGENOM" id="CLU_108412_0_1_5"/>
<dbReference type="OrthoDB" id="9807461at2"/>
<dbReference type="Proteomes" id="UP000007029">
    <property type="component" value="Chromosome"/>
</dbReference>
<dbReference type="GO" id="GO:0005524">
    <property type="term" value="F:ATP binding"/>
    <property type="evidence" value="ECO:0007669"/>
    <property type="project" value="UniProtKB-KW"/>
</dbReference>
<dbReference type="GO" id="GO:0003677">
    <property type="term" value="F:DNA binding"/>
    <property type="evidence" value="ECO:0007669"/>
    <property type="project" value="UniProtKB-KW"/>
</dbReference>
<dbReference type="GO" id="GO:0008270">
    <property type="term" value="F:zinc ion binding"/>
    <property type="evidence" value="ECO:0007669"/>
    <property type="project" value="UniProtKB-UniRule"/>
</dbReference>
<dbReference type="GO" id="GO:0045892">
    <property type="term" value="P:negative regulation of DNA-templated transcription"/>
    <property type="evidence" value="ECO:0007669"/>
    <property type="project" value="UniProtKB-UniRule"/>
</dbReference>
<dbReference type="HAMAP" id="MF_00440">
    <property type="entry name" value="NrdR"/>
    <property type="match status" value="1"/>
</dbReference>
<dbReference type="InterPro" id="IPR005144">
    <property type="entry name" value="ATP-cone_dom"/>
</dbReference>
<dbReference type="InterPro" id="IPR055173">
    <property type="entry name" value="NrdR-like_N"/>
</dbReference>
<dbReference type="InterPro" id="IPR003796">
    <property type="entry name" value="RNR_NrdR-like"/>
</dbReference>
<dbReference type="NCBIfam" id="TIGR00244">
    <property type="entry name" value="transcriptional regulator NrdR"/>
    <property type="match status" value="1"/>
</dbReference>
<dbReference type="PANTHER" id="PTHR30455">
    <property type="entry name" value="TRANSCRIPTIONAL REPRESSOR NRDR"/>
    <property type="match status" value="1"/>
</dbReference>
<dbReference type="PANTHER" id="PTHR30455:SF2">
    <property type="entry name" value="TRANSCRIPTIONAL REPRESSOR NRDR"/>
    <property type="match status" value="1"/>
</dbReference>
<dbReference type="Pfam" id="PF03477">
    <property type="entry name" value="ATP-cone"/>
    <property type="match status" value="1"/>
</dbReference>
<dbReference type="Pfam" id="PF22811">
    <property type="entry name" value="Zn_ribbon_NrdR"/>
    <property type="match status" value="1"/>
</dbReference>
<dbReference type="PROSITE" id="PS51161">
    <property type="entry name" value="ATP_CONE"/>
    <property type="match status" value="1"/>
</dbReference>